<sequence length="324" mass="38101">MRSAVLFFFALPFSISLYSSSNKNFPYWILLEKGRQFLYSKSEFSKSNLTHAINYLQEALLRKGVYPEASYYLSVAYGMSGNAILEKLNLYKSFEDRYYLLDESFEKKILFSLAKMAELENNYVDTIDYLNDILNKFSTKKDYYSYHDYSQGENSMSNNELNASFYLTSYLKQVRGAFGIDFTFNLYRFKNYNVIDTHQLLSKVYLHLKAYELSITHGLIAAVGILTRMYDYVCYYEPVYQFKNLRSFVQKINKYKAIKNAFESTDFWEIVYNVAAATYAYSNGNYKFRAIDTWKLVVDLAPRFSPYIAKSRSQIKNSVYLKKN</sequence>
<feature type="chain" id="PRO_0000174381" description="Uncharacterized protein BB_0089">
    <location>
        <begin position="1"/>
        <end position="324"/>
    </location>
</feature>
<gene>
    <name type="ordered locus">BB_0089</name>
</gene>
<accession>O51116</accession>
<reference key="1">
    <citation type="journal article" date="1997" name="Nature">
        <title>Genomic sequence of a Lyme disease spirochaete, Borrelia burgdorferi.</title>
        <authorList>
            <person name="Fraser C.M."/>
            <person name="Casjens S."/>
            <person name="Huang W.M."/>
            <person name="Sutton G.G."/>
            <person name="Clayton R.A."/>
            <person name="Lathigra R."/>
            <person name="White O."/>
            <person name="Ketchum K.A."/>
            <person name="Dodson R.J."/>
            <person name="Hickey E.K."/>
            <person name="Gwinn M.L."/>
            <person name="Dougherty B.A."/>
            <person name="Tomb J.-F."/>
            <person name="Fleischmann R.D."/>
            <person name="Richardson D.L."/>
            <person name="Peterson J.D."/>
            <person name="Kerlavage A.R."/>
            <person name="Quackenbush J."/>
            <person name="Salzberg S.L."/>
            <person name="Hanson M."/>
            <person name="van Vugt R."/>
            <person name="Palmer N."/>
            <person name="Adams M.D."/>
            <person name="Gocayne J.D."/>
            <person name="Weidman J.F."/>
            <person name="Utterback T.R."/>
            <person name="Watthey L."/>
            <person name="McDonald L.A."/>
            <person name="Artiach P."/>
            <person name="Bowman C."/>
            <person name="Garland S.A."/>
            <person name="Fujii C."/>
            <person name="Cotton M.D."/>
            <person name="Horst K."/>
            <person name="Roberts K.M."/>
            <person name="Hatch B."/>
            <person name="Smith H.O."/>
            <person name="Venter J.C."/>
        </authorList>
    </citation>
    <scope>NUCLEOTIDE SEQUENCE [LARGE SCALE GENOMIC DNA]</scope>
    <source>
        <strain>ATCC 35210 / DSM 4680 / CIP 102532 / B31</strain>
    </source>
</reference>
<proteinExistence type="predicted"/>
<organism>
    <name type="scientific">Borreliella burgdorferi (strain ATCC 35210 / DSM 4680 / CIP 102532 / B31)</name>
    <name type="common">Borrelia burgdorferi</name>
    <dbReference type="NCBI Taxonomy" id="224326"/>
    <lineage>
        <taxon>Bacteria</taxon>
        <taxon>Pseudomonadati</taxon>
        <taxon>Spirochaetota</taxon>
        <taxon>Spirochaetia</taxon>
        <taxon>Spirochaetales</taxon>
        <taxon>Borreliaceae</taxon>
        <taxon>Borreliella</taxon>
    </lineage>
</organism>
<keyword id="KW-1185">Reference proteome</keyword>
<name>Y089_BORBU</name>
<dbReference type="EMBL" id="AE000783">
    <property type="protein sequence ID" value="AAC66490.1"/>
    <property type="molecule type" value="Genomic_DNA"/>
</dbReference>
<dbReference type="PIR" id="A70111">
    <property type="entry name" value="A70111"/>
</dbReference>
<dbReference type="RefSeq" id="NP_212223.1">
    <property type="nucleotide sequence ID" value="NC_001318.1"/>
</dbReference>
<dbReference type="RefSeq" id="WP_002656179.1">
    <property type="nucleotide sequence ID" value="NC_001318.1"/>
</dbReference>
<dbReference type="SMR" id="O51116"/>
<dbReference type="STRING" id="224326.BB_0089"/>
<dbReference type="PaxDb" id="224326-BB_0089"/>
<dbReference type="EnsemblBacteria" id="AAC66490">
    <property type="protein sequence ID" value="AAC66490"/>
    <property type="gene ID" value="BB_0089"/>
</dbReference>
<dbReference type="KEGG" id="bbu:BB_0089"/>
<dbReference type="PATRIC" id="fig|224326.49.peg.487"/>
<dbReference type="HOGENOM" id="CLU_857035_0_0_12"/>
<dbReference type="OrthoDB" id="350857at2"/>
<dbReference type="Proteomes" id="UP000001807">
    <property type="component" value="Chromosome"/>
</dbReference>
<protein>
    <recommendedName>
        <fullName>Uncharacterized protein BB_0089</fullName>
    </recommendedName>
</protein>